<organism>
    <name type="scientific">Salmonella typhimurium (strain LT2 / SGSC1412 / ATCC 700720)</name>
    <dbReference type="NCBI Taxonomy" id="99287"/>
    <lineage>
        <taxon>Bacteria</taxon>
        <taxon>Pseudomonadati</taxon>
        <taxon>Pseudomonadota</taxon>
        <taxon>Gammaproteobacteria</taxon>
        <taxon>Enterobacterales</taxon>
        <taxon>Enterobacteriaceae</taxon>
        <taxon>Salmonella</taxon>
    </lineage>
</organism>
<name>RBFA_SALTY</name>
<proteinExistence type="inferred from homology"/>
<evidence type="ECO:0000255" key="1">
    <source>
        <dbReference type="HAMAP-Rule" id="MF_00003"/>
    </source>
</evidence>
<sequence>MAKEFGRPQRVAQEMQKEIAIILQREIKDPRLGMMTTVSGVEMSRDLAYAKVFVTFLNDKDEDAVKAGIKALQEASGFIRSLLGKAMRLRIVPELTFFYDNSLVEGMRMSNLVTNVVKHDEERRVNPDDSKED</sequence>
<reference key="1">
    <citation type="journal article" date="2001" name="Nature">
        <title>Complete genome sequence of Salmonella enterica serovar Typhimurium LT2.</title>
        <authorList>
            <person name="McClelland M."/>
            <person name="Sanderson K.E."/>
            <person name="Spieth J."/>
            <person name="Clifton S.W."/>
            <person name="Latreille P."/>
            <person name="Courtney L."/>
            <person name="Porwollik S."/>
            <person name="Ali J."/>
            <person name="Dante M."/>
            <person name="Du F."/>
            <person name="Hou S."/>
            <person name="Layman D."/>
            <person name="Leonard S."/>
            <person name="Nguyen C."/>
            <person name="Scott K."/>
            <person name="Holmes A."/>
            <person name="Grewal N."/>
            <person name="Mulvaney E."/>
            <person name="Ryan E."/>
            <person name="Sun H."/>
            <person name="Florea L."/>
            <person name="Miller W."/>
            <person name="Stoneking T."/>
            <person name="Nhan M."/>
            <person name="Waterston R."/>
            <person name="Wilson R.K."/>
        </authorList>
    </citation>
    <scope>NUCLEOTIDE SEQUENCE [LARGE SCALE GENOMIC DNA]</scope>
    <source>
        <strain>LT2 / SGSC1412 / ATCC 700720</strain>
    </source>
</reference>
<feature type="chain" id="PRO_0000102726" description="Ribosome-binding factor A">
    <location>
        <begin position="1"/>
        <end position="133"/>
    </location>
</feature>
<gene>
    <name evidence="1" type="primary">rbfA</name>
    <name type="ordered locus">STM3285</name>
</gene>
<comment type="function">
    <text evidence="1">One of several proteins that assist in the late maturation steps of the functional core of the 30S ribosomal subunit. Associates with free 30S ribosomal subunits (but not with 30S subunits that are part of 70S ribosomes or polysomes). Required for efficient processing of 16S rRNA. May interact with the 5'-terminal helix region of 16S rRNA.</text>
</comment>
<comment type="subunit">
    <text evidence="1">Monomer. Binds 30S ribosomal subunits, but not 50S ribosomal subunits or 70S ribosomes.</text>
</comment>
<comment type="subcellular location">
    <subcellularLocation>
        <location evidence="1">Cytoplasm</location>
    </subcellularLocation>
</comment>
<comment type="similarity">
    <text evidence="1">Belongs to the RbfA family.</text>
</comment>
<dbReference type="EMBL" id="AE006468">
    <property type="protein sequence ID" value="AAL22157.1"/>
    <property type="molecule type" value="Genomic_DNA"/>
</dbReference>
<dbReference type="RefSeq" id="NP_462198.1">
    <property type="nucleotide sequence ID" value="NC_003197.2"/>
</dbReference>
<dbReference type="RefSeq" id="WP_001040199.1">
    <property type="nucleotide sequence ID" value="NC_003197.2"/>
</dbReference>
<dbReference type="SMR" id="Q8ZLT1"/>
<dbReference type="STRING" id="99287.STM3285"/>
<dbReference type="PaxDb" id="99287-STM3285"/>
<dbReference type="GeneID" id="1254808"/>
<dbReference type="KEGG" id="stm:STM3285"/>
<dbReference type="PATRIC" id="fig|99287.12.peg.3484"/>
<dbReference type="HOGENOM" id="CLU_089475_5_0_6"/>
<dbReference type="OMA" id="QHAKIFV"/>
<dbReference type="PhylomeDB" id="Q8ZLT1"/>
<dbReference type="BioCyc" id="SENT99287:STM3285-MONOMER"/>
<dbReference type="Proteomes" id="UP000001014">
    <property type="component" value="Chromosome"/>
</dbReference>
<dbReference type="GO" id="GO:0005829">
    <property type="term" value="C:cytosol"/>
    <property type="evidence" value="ECO:0000318"/>
    <property type="project" value="GO_Central"/>
</dbReference>
<dbReference type="GO" id="GO:0043024">
    <property type="term" value="F:ribosomal small subunit binding"/>
    <property type="evidence" value="ECO:0000318"/>
    <property type="project" value="GO_Central"/>
</dbReference>
<dbReference type="GO" id="GO:0030490">
    <property type="term" value="P:maturation of SSU-rRNA"/>
    <property type="evidence" value="ECO:0007669"/>
    <property type="project" value="UniProtKB-UniRule"/>
</dbReference>
<dbReference type="GO" id="GO:0042254">
    <property type="term" value="P:ribosome biogenesis"/>
    <property type="evidence" value="ECO:0000318"/>
    <property type="project" value="GO_Central"/>
</dbReference>
<dbReference type="FunFam" id="3.30.300.20:FF:000007">
    <property type="entry name" value="Ribosome-binding factor A"/>
    <property type="match status" value="1"/>
</dbReference>
<dbReference type="Gene3D" id="3.30.300.20">
    <property type="match status" value="1"/>
</dbReference>
<dbReference type="HAMAP" id="MF_00003">
    <property type="entry name" value="RbfA"/>
    <property type="match status" value="1"/>
</dbReference>
<dbReference type="InterPro" id="IPR015946">
    <property type="entry name" value="KH_dom-like_a/b"/>
</dbReference>
<dbReference type="InterPro" id="IPR000238">
    <property type="entry name" value="RbfA"/>
</dbReference>
<dbReference type="InterPro" id="IPR023799">
    <property type="entry name" value="RbfA_dom_sf"/>
</dbReference>
<dbReference type="InterPro" id="IPR020053">
    <property type="entry name" value="Ribosome-bd_factorA_CS"/>
</dbReference>
<dbReference type="NCBIfam" id="TIGR00082">
    <property type="entry name" value="rbfA"/>
    <property type="match status" value="1"/>
</dbReference>
<dbReference type="PANTHER" id="PTHR33515">
    <property type="entry name" value="RIBOSOME-BINDING FACTOR A, CHLOROPLASTIC-RELATED"/>
    <property type="match status" value="1"/>
</dbReference>
<dbReference type="PANTHER" id="PTHR33515:SF1">
    <property type="entry name" value="RIBOSOME-BINDING FACTOR A, CHLOROPLASTIC-RELATED"/>
    <property type="match status" value="1"/>
</dbReference>
<dbReference type="Pfam" id="PF02033">
    <property type="entry name" value="RBFA"/>
    <property type="match status" value="1"/>
</dbReference>
<dbReference type="SUPFAM" id="SSF89919">
    <property type="entry name" value="Ribosome-binding factor A, RbfA"/>
    <property type="match status" value="1"/>
</dbReference>
<dbReference type="PROSITE" id="PS01319">
    <property type="entry name" value="RBFA"/>
    <property type="match status" value="1"/>
</dbReference>
<keyword id="KW-0963">Cytoplasm</keyword>
<keyword id="KW-1185">Reference proteome</keyword>
<keyword id="KW-0690">Ribosome biogenesis</keyword>
<accession>Q8ZLT1</accession>
<protein>
    <recommendedName>
        <fullName evidence="1">Ribosome-binding factor A</fullName>
    </recommendedName>
</protein>